<gene>
    <name type="primary">HA</name>
</gene>
<comment type="function">
    <text>Binds to sialic acid-containing receptors on the cell surface, bringing about the attachment of the virus particle to the cell. Plays a major role in the determination of host range restriction and virulence. Class I viral fusion protein. Responsible for penetration of the virus into the cell cytoplasm by mediating the fusion of the membrane of the endocytosed virus particle with the endosomal membrane. Low pH in endosomes induce an irreversible conformational change in HA2, releasing the fusion hydrophobic peptide. Several trimers are required to form a competent fusion pore.</text>
</comment>
<comment type="subunit">
    <text>Homotrimer of disulfide-linked HA1-HA2.</text>
</comment>
<comment type="subcellular location">
    <subcellularLocation>
        <location evidence="3">Virion membrane</location>
        <topology evidence="3">Single-pass type I membrane protein</topology>
    </subcellularLocation>
    <subcellularLocation>
        <location>Host apical cell membrane</location>
        <topology>Single-pass type I membrane protein</topology>
    </subcellularLocation>
    <text>Targeted to the apical plasma membrane in epithelial polarized cells through a signal present in the transmembrane domain. Associated with glycosphingolipid- and cholesterol-enriched detergent-resistant lipid rafts.</text>
</comment>
<comment type="PTM">
    <text evidence="1">In natural infection, inactive HA is matured into HA1 and HA2 outside the cell by one or more trypsin-like, arginine-specific endoprotease secreted by the bronchial epithelial cells. One identified protease that may be involved in this process is secreted in lungs by club cells (By similarity).</text>
</comment>
<comment type="PTM">
    <text evidence="1">Palmitoylated.</text>
</comment>
<comment type="miscellaneous">
    <text>Major glycoprotein, comprises over 80% of the envelope proteins present in virus particle.</text>
</comment>
<comment type="miscellaneous">
    <text>The extent of infection into host organism is determined by HA. Influenza viruses bud from the apical surface of polarized epithelial cells (e.g. bronchial epithelial cells) into lumen of lungs and are therefore usually pneumotropic. The reason is that HA is cleaved by tryptase clara which is restricted to lungs. However, HAs of H5 and H7 pantropic avian viruses subtypes can be cleaved by furin and subtilisin-type enzymes, allowing the virus to grow in other organs than lungs.</text>
</comment>
<comment type="miscellaneous">
    <text>The influenza B genome consist of 8 RNA segments. Genetic variation of hemagglutinin and/or neuraminidase genes results in the emergence of new influenza strains. The mechanism of variation can be the result of point mutations or the result of genetic reassortment between segments of two different strains.</text>
</comment>
<comment type="similarity">
    <text evidence="3">Belongs to the influenza viruses hemagglutinin family.</text>
</comment>
<proteinExistence type="inferred from homology"/>
<keyword id="KW-1015">Disulfide bond</keyword>
<keyword id="KW-1170">Fusion of virus membrane with host endosomal membrane</keyword>
<keyword id="KW-1168">Fusion of virus membrane with host membrane</keyword>
<keyword id="KW-0325">Glycoprotein</keyword>
<keyword id="KW-0348">Hemagglutinin</keyword>
<keyword id="KW-1032">Host cell membrane</keyword>
<keyword id="KW-1043">Host membrane</keyword>
<keyword id="KW-0945">Host-virus interaction</keyword>
<keyword id="KW-0449">Lipoprotein</keyword>
<keyword id="KW-0472">Membrane</keyword>
<keyword id="KW-0564">Palmitate</keyword>
<keyword id="KW-0732">Signal</keyword>
<keyword id="KW-0812">Transmembrane</keyword>
<keyword id="KW-1161">Viral attachment to host cell</keyword>
<keyword id="KW-0261">Viral envelope protein</keyword>
<keyword id="KW-1162">Viral penetration into host cytoplasm</keyword>
<keyword id="KW-0946">Virion</keyword>
<keyword id="KW-1160">Virus entry into host cell</keyword>
<evidence type="ECO:0000250" key="1"/>
<evidence type="ECO:0000255" key="2"/>
<evidence type="ECO:0000305" key="3"/>
<protein>
    <recommendedName>
        <fullName>Hemagglutinin</fullName>
    </recommendedName>
    <component>
        <recommendedName>
            <fullName>Hemagglutinin HA1 chain</fullName>
        </recommendedName>
    </component>
</protein>
<organismHost>
    <name type="scientific">Homo sapiens</name>
    <name type="common">Human</name>
    <dbReference type="NCBI Taxonomy" id="9606"/>
</organismHost>
<dbReference type="EMBL" id="M65171">
    <property type="protein sequence ID" value="AAA43709.1"/>
    <property type="molecule type" value="Genomic_RNA"/>
</dbReference>
<dbReference type="PIR" id="JQ1912">
    <property type="entry name" value="JQ1912"/>
</dbReference>
<dbReference type="SMR" id="Q67375"/>
<dbReference type="GlyCosmos" id="Q67375">
    <property type="glycosylation" value="8 sites, No reported glycans"/>
</dbReference>
<dbReference type="GO" id="GO:0020002">
    <property type="term" value="C:host cell plasma membrane"/>
    <property type="evidence" value="ECO:0007669"/>
    <property type="project" value="UniProtKB-SubCell"/>
</dbReference>
<dbReference type="GO" id="GO:0016020">
    <property type="term" value="C:membrane"/>
    <property type="evidence" value="ECO:0007669"/>
    <property type="project" value="UniProtKB-KW"/>
</dbReference>
<dbReference type="GO" id="GO:0019031">
    <property type="term" value="C:viral envelope"/>
    <property type="evidence" value="ECO:0007669"/>
    <property type="project" value="UniProtKB-KW"/>
</dbReference>
<dbReference type="GO" id="GO:0055036">
    <property type="term" value="C:virion membrane"/>
    <property type="evidence" value="ECO:0007669"/>
    <property type="project" value="UniProtKB-SubCell"/>
</dbReference>
<dbReference type="GO" id="GO:0046789">
    <property type="term" value="F:host cell surface receptor binding"/>
    <property type="evidence" value="ECO:0007669"/>
    <property type="project" value="InterPro"/>
</dbReference>
<dbReference type="GO" id="GO:0039654">
    <property type="term" value="P:fusion of virus membrane with host endosome membrane"/>
    <property type="evidence" value="ECO:0007669"/>
    <property type="project" value="UniProtKB-KW"/>
</dbReference>
<dbReference type="GO" id="GO:0019064">
    <property type="term" value="P:fusion of virus membrane with host plasma membrane"/>
    <property type="evidence" value="ECO:0007669"/>
    <property type="project" value="InterPro"/>
</dbReference>
<dbReference type="GO" id="GO:0046718">
    <property type="term" value="P:symbiont entry into host cell"/>
    <property type="evidence" value="ECO:0007669"/>
    <property type="project" value="UniProtKB-KW"/>
</dbReference>
<dbReference type="GO" id="GO:0019062">
    <property type="term" value="P:virion attachment to host cell"/>
    <property type="evidence" value="ECO:0007669"/>
    <property type="project" value="UniProtKB-KW"/>
</dbReference>
<dbReference type="Gene3D" id="3.90.209.20">
    <property type="match status" value="1"/>
</dbReference>
<dbReference type="Gene3D" id="2.10.77.10">
    <property type="entry name" value="Hemagglutinin Chain A, Domain 2"/>
    <property type="match status" value="1"/>
</dbReference>
<dbReference type="InterPro" id="IPR008980">
    <property type="entry name" value="Capsid_hemagglutn"/>
</dbReference>
<dbReference type="InterPro" id="IPR013828">
    <property type="entry name" value="Hemagglutn_HA1_a/b_dom_sf"/>
</dbReference>
<dbReference type="InterPro" id="IPR001364">
    <property type="entry name" value="Hemagglutn_influenz_A/B"/>
</dbReference>
<dbReference type="Pfam" id="PF00509">
    <property type="entry name" value="Hemagglutinin"/>
    <property type="match status" value="1"/>
</dbReference>
<dbReference type="SUPFAM" id="SSF49818">
    <property type="entry name" value="Viral protein domain"/>
    <property type="match status" value="1"/>
</dbReference>
<sequence length="360" mass="38968">MKAIIVLLMVVTSNADRICTGITSSNSPHVVKTATQGEVNVTGVIPLTTTPTKSHFANLKGTKTRGKLCPNCLNCTDLDVALARPMCVGTTPSAKASILHEVRPVTSGCFPIMHDRTKIRQLPNLLRGYENIRLSTQNVINAERAPGGPYRLGTSGSCPNVTSRDGFFATMAWAVPRDNKTATNPLTVEVPYICTKGEDQITVWGFHSDNKTQMKNLYGDSNPQKFTSSANGVTTHYVSQIGGFPNQTEDGGLPQSGRIVVDYMVQKPGKTGTIVYQRGVLLPQKVWCASGRSKVIKGSLPLIGEADCLHAKYGGLNKSKPYYTGEHAKAIGNCPIWVKTPLKLANGTKYRPPAKLLKER</sequence>
<name>HEMA_INBP9</name>
<accession>Q67375</accession>
<reference key="1">
    <citation type="journal article" date="1992" name="J. Gen. Virol.">
        <title>Antigenic and genetic characterization of the haemagglutinins of recent cocirculating strains of influenza B virus.</title>
        <authorList>
            <person name="Rota P.A."/>
            <person name="Hemphill M."/>
            <person name="Whistler T."/>
            <person name="Regnery H.L."/>
            <person name="Kendal A.P."/>
        </authorList>
    </citation>
    <scope>NUCLEOTIDE SEQUENCE [GENOMIC RNA]</scope>
</reference>
<organism>
    <name type="scientific">Influenza B virus (strain B/Panama/45/1990)</name>
    <dbReference type="NCBI Taxonomy" id="408929"/>
    <lineage>
        <taxon>Viruses</taxon>
        <taxon>Riboviria</taxon>
        <taxon>Orthornavirae</taxon>
        <taxon>Negarnaviricota</taxon>
        <taxon>Polyploviricotina</taxon>
        <taxon>Insthoviricetes</taxon>
        <taxon>Articulavirales</taxon>
        <taxon>Orthomyxoviridae</taxon>
        <taxon>Betainfluenzavirus</taxon>
        <taxon>Betainfluenzavirus influenzae</taxon>
        <taxon>Influenza B virus</taxon>
    </lineage>
</organism>
<feature type="signal peptide" evidence="2">
    <location>
        <begin position="1"/>
        <end position="15"/>
    </location>
</feature>
<feature type="chain" id="PRO_0000039125" description="Hemagglutinin HA1 chain" evidence="1">
    <location>
        <begin position="16"/>
        <end position="360"/>
    </location>
</feature>
<feature type="glycosylation site" description="N-linked (GlcNAc...) asparagine; by host" evidence="2">
    <location>
        <position position="40"/>
    </location>
</feature>
<feature type="glycosylation site" description="N-linked (GlcNAc...) asparagine; by host" evidence="2">
    <location>
        <position position="74"/>
    </location>
</feature>
<feature type="glycosylation site" description="N-linked (GlcNAc...) asparagine; by host" evidence="2">
    <location>
        <position position="160"/>
    </location>
</feature>
<feature type="glycosylation site" description="N-linked (GlcNAc...) asparagine; by host" evidence="2">
    <location>
        <position position="179"/>
    </location>
</feature>
<feature type="glycosylation site" description="N-linked (GlcNAc...) asparagine; by host" evidence="2">
    <location>
        <position position="210"/>
    </location>
</feature>
<feature type="glycosylation site" description="N-linked (GlcNAc...) asparagine; by host" evidence="2">
    <location>
        <position position="246"/>
    </location>
</feature>
<feature type="glycosylation site" description="N-linked (GlcNAc...) asparagine; by host" evidence="2">
    <location>
        <position position="317"/>
    </location>
</feature>
<feature type="glycosylation site" description="N-linked (GlcNAc...) asparagine; by host" evidence="2">
    <location>
        <position position="346"/>
    </location>
</feature>
<feature type="non-terminal residue">
    <location>
        <position position="360"/>
    </location>
</feature>